<keyword id="KW-0238">DNA-binding</keyword>
<keyword id="KW-0479">Metal-binding</keyword>
<keyword id="KW-1185">Reference proteome</keyword>
<keyword id="KW-0677">Repeat</keyword>
<keyword id="KW-0862">Zinc</keyword>
<keyword id="KW-0863">Zinc-finger</keyword>
<protein>
    <recommendedName>
        <fullName>Zinc finger CCCH domain-containing protein 17</fullName>
        <shortName>AtC3H17</shortName>
    </recommendedName>
</protein>
<proteinExistence type="evidence at protein level"/>
<organism>
    <name type="scientific">Arabidopsis thaliana</name>
    <name type="common">Mouse-ear cress</name>
    <dbReference type="NCBI Taxonomy" id="3702"/>
    <lineage>
        <taxon>Eukaryota</taxon>
        <taxon>Viridiplantae</taxon>
        <taxon>Streptophyta</taxon>
        <taxon>Embryophyta</taxon>
        <taxon>Tracheophyta</taxon>
        <taxon>Spermatophyta</taxon>
        <taxon>Magnoliopsida</taxon>
        <taxon>eudicotyledons</taxon>
        <taxon>Gunneridae</taxon>
        <taxon>Pentapetalae</taxon>
        <taxon>rosids</taxon>
        <taxon>malvids</taxon>
        <taxon>Brassicales</taxon>
        <taxon>Brassicaceae</taxon>
        <taxon>Camelineae</taxon>
        <taxon>Arabidopsis</taxon>
    </lineage>
</organism>
<dbReference type="EMBL" id="AC005936">
    <property type="protein sequence ID" value="AAC97218.1"/>
    <property type="molecule type" value="Genomic_DNA"/>
</dbReference>
<dbReference type="EMBL" id="CP002685">
    <property type="protein sequence ID" value="AEC05554.1"/>
    <property type="molecule type" value="Genomic_DNA"/>
</dbReference>
<dbReference type="EMBL" id="AY059770">
    <property type="protein sequence ID" value="AAL24118.1"/>
    <property type="molecule type" value="mRNA"/>
</dbReference>
<dbReference type="EMBL" id="AY099878">
    <property type="protein sequence ID" value="AAM20729.1"/>
    <property type="molecule type" value="mRNA"/>
</dbReference>
<dbReference type="EMBL" id="BT000894">
    <property type="protein sequence ID" value="AAN41294.1"/>
    <property type="molecule type" value="mRNA"/>
</dbReference>
<dbReference type="PIR" id="F84433">
    <property type="entry name" value="F84433"/>
</dbReference>
<dbReference type="RefSeq" id="NP_027420.1">
    <property type="nucleotide sequence ID" value="NM_126276.4"/>
</dbReference>
<dbReference type="BioGRID" id="150">
    <property type="interactions" value="6"/>
</dbReference>
<dbReference type="FunCoup" id="Q9ZUM0">
    <property type="interactions" value="1483"/>
</dbReference>
<dbReference type="IntAct" id="Q9ZUM0">
    <property type="interactions" value="6"/>
</dbReference>
<dbReference type="STRING" id="3702.Q9ZUM0"/>
<dbReference type="iPTMnet" id="Q9ZUM0"/>
<dbReference type="PaxDb" id="3702-AT2G02160.1"/>
<dbReference type="ProteomicsDB" id="239085"/>
<dbReference type="EnsemblPlants" id="AT2G02160.1">
    <property type="protein sequence ID" value="AT2G02160.1"/>
    <property type="gene ID" value="AT2G02160"/>
</dbReference>
<dbReference type="GeneID" id="814747"/>
<dbReference type="Gramene" id="AT2G02160.1">
    <property type="protein sequence ID" value="AT2G02160.1"/>
    <property type="gene ID" value="AT2G02160"/>
</dbReference>
<dbReference type="KEGG" id="ath:AT2G02160"/>
<dbReference type="Araport" id="AT2G02160"/>
<dbReference type="TAIR" id="AT2G02160">
    <property type="gene designation" value="ATC3H17"/>
</dbReference>
<dbReference type="eggNOG" id="KOG4791">
    <property type="taxonomic scope" value="Eukaryota"/>
</dbReference>
<dbReference type="HOGENOM" id="CLU_025172_0_0_1"/>
<dbReference type="InParanoid" id="Q9ZUM0"/>
<dbReference type="OMA" id="PCFFFQK"/>
<dbReference type="PhylomeDB" id="Q9ZUM0"/>
<dbReference type="PRO" id="PR:Q9ZUM0"/>
<dbReference type="Proteomes" id="UP000006548">
    <property type="component" value="Chromosome 2"/>
</dbReference>
<dbReference type="ExpressionAtlas" id="Q9ZUM0">
    <property type="expression patterns" value="baseline and differential"/>
</dbReference>
<dbReference type="GO" id="GO:0005634">
    <property type="term" value="C:nucleus"/>
    <property type="evidence" value="ECO:0000314"/>
    <property type="project" value="TAIR"/>
</dbReference>
<dbReference type="GO" id="GO:0003677">
    <property type="term" value="F:DNA binding"/>
    <property type="evidence" value="ECO:0007669"/>
    <property type="project" value="UniProtKB-KW"/>
</dbReference>
<dbReference type="GO" id="GO:0003729">
    <property type="term" value="F:mRNA binding"/>
    <property type="evidence" value="ECO:0000314"/>
    <property type="project" value="TAIR"/>
</dbReference>
<dbReference type="GO" id="GO:0008270">
    <property type="term" value="F:zinc ion binding"/>
    <property type="evidence" value="ECO:0007669"/>
    <property type="project" value="UniProtKB-KW"/>
</dbReference>
<dbReference type="GO" id="GO:0045893">
    <property type="term" value="P:positive regulation of DNA-templated transcription"/>
    <property type="evidence" value="ECO:0000314"/>
    <property type="project" value="TAIR"/>
</dbReference>
<dbReference type="FunFam" id="4.10.1000.10:FF:000021">
    <property type="entry name" value="Zinc finger CCCH domain-containing protein 17"/>
    <property type="match status" value="1"/>
</dbReference>
<dbReference type="Gene3D" id="4.10.1000.10">
    <property type="entry name" value="Zinc finger, CCCH-type"/>
    <property type="match status" value="2"/>
</dbReference>
<dbReference type="InterPro" id="IPR041686">
    <property type="entry name" value="Znf-CCCH_3"/>
</dbReference>
<dbReference type="InterPro" id="IPR000571">
    <property type="entry name" value="Znf_CCCH"/>
</dbReference>
<dbReference type="InterPro" id="IPR036855">
    <property type="entry name" value="Znf_CCCH_sf"/>
</dbReference>
<dbReference type="PANTHER" id="PTHR15725:SF14">
    <property type="entry name" value="ZINC FINGER CCCH DOMAIN-CONTAINING PROTEIN 11A"/>
    <property type="match status" value="1"/>
</dbReference>
<dbReference type="PANTHER" id="PTHR15725">
    <property type="entry name" value="ZN-FINGER, C-X8-C-X5-C-X3-H TYPE-CONTAINING"/>
    <property type="match status" value="1"/>
</dbReference>
<dbReference type="Pfam" id="PF14608">
    <property type="entry name" value="zf-CCCH_2"/>
    <property type="match status" value="1"/>
</dbReference>
<dbReference type="Pfam" id="PF15663">
    <property type="entry name" value="zf-CCCH_3"/>
    <property type="match status" value="1"/>
</dbReference>
<dbReference type="SMART" id="SM00356">
    <property type="entry name" value="ZnF_C3H1"/>
    <property type="match status" value="3"/>
</dbReference>
<dbReference type="SUPFAM" id="SSF90229">
    <property type="entry name" value="CCCH zinc finger"/>
    <property type="match status" value="1"/>
</dbReference>
<dbReference type="PROSITE" id="PS50103">
    <property type="entry name" value="ZF_C3H1"/>
    <property type="match status" value="3"/>
</dbReference>
<reference key="1">
    <citation type="journal article" date="1999" name="Nature">
        <title>Sequence and analysis of chromosome 2 of the plant Arabidopsis thaliana.</title>
        <authorList>
            <person name="Lin X."/>
            <person name="Kaul S."/>
            <person name="Rounsley S.D."/>
            <person name="Shea T.P."/>
            <person name="Benito M.-I."/>
            <person name="Town C.D."/>
            <person name="Fujii C.Y."/>
            <person name="Mason T.M."/>
            <person name="Bowman C.L."/>
            <person name="Barnstead M.E."/>
            <person name="Feldblyum T.V."/>
            <person name="Buell C.R."/>
            <person name="Ketchum K.A."/>
            <person name="Lee J.J."/>
            <person name="Ronning C.M."/>
            <person name="Koo H.L."/>
            <person name="Moffat K.S."/>
            <person name="Cronin L.A."/>
            <person name="Shen M."/>
            <person name="Pai G."/>
            <person name="Van Aken S."/>
            <person name="Umayam L."/>
            <person name="Tallon L.J."/>
            <person name="Gill J.E."/>
            <person name="Adams M.D."/>
            <person name="Carrera A.J."/>
            <person name="Creasy T.H."/>
            <person name="Goodman H.M."/>
            <person name="Somerville C.R."/>
            <person name="Copenhaver G.P."/>
            <person name="Preuss D."/>
            <person name="Nierman W.C."/>
            <person name="White O."/>
            <person name="Eisen J.A."/>
            <person name="Salzberg S.L."/>
            <person name="Fraser C.M."/>
            <person name="Venter J.C."/>
        </authorList>
    </citation>
    <scope>NUCLEOTIDE SEQUENCE [LARGE SCALE GENOMIC DNA]</scope>
    <source>
        <strain>cv. Columbia</strain>
    </source>
</reference>
<reference key="2">
    <citation type="journal article" date="2017" name="Plant J.">
        <title>Araport11: a complete reannotation of the Arabidopsis thaliana reference genome.</title>
        <authorList>
            <person name="Cheng C.Y."/>
            <person name="Krishnakumar V."/>
            <person name="Chan A.P."/>
            <person name="Thibaud-Nissen F."/>
            <person name="Schobel S."/>
            <person name="Town C.D."/>
        </authorList>
    </citation>
    <scope>GENOME REANNOTATION</scope>
    <source>
        <strain>cv. Columbia</strain>
    </source>
</reference>
<reference key="3">
    <citation type="journal article" date="2003" name="Science">
        <title>Empirical analysis of transcriptional activity in the Arabidopsis genome.</title>
        <authorList>
            <person name="Yamada K."/>
            <person name="Lim J."/>
            <person name="Dale J.M."/>
            <person name="Chen H."/>
            <person name="Shinn P."/>
            <person name="Palm C.J."/>
            <person name="Southwick A.M."/>
            <person name="Wu H.C."/>
            <person name="Kim C.J."/>
            <person name="Nguyen M."/>
            <person name="Pham P.K."/>
            <person name="Cheuk R.F."/>
            <person name="Karlin-Newmann G."/>
            <person name="Liu S.X."/>
            <person name="Lam B."/>
            <person name="Sakano H."/>
            <person name="Wu T."/>
            <person name="Yu G."/>
            <person name="Miranda M."/>
            <person name="Quach H.L."/>
            <person name="Tripp M."/>
            <person name="Chang C.H."/>
            <person name="Lee J.M."/>
            <person name="Toriumi M.J."/>
            <person name="Chan M.M."/>
            <person name="Tang C.C."/>
            <person name="Onodera C.S."/>
            <person name="Deng J.M."/>
            <person name="Akiyama K."/>
            <person name="Ansari Y."/>
            <person name="Arakawa T."/>
            <person name="Banh J."/>
            <person name="Banno F."/>
            <person name="Bowser L."/>
            <person name="Brooks S.Y."/>
            <person name="Carninci P."/>
            <person name="Chao Q."/>
            <person name="Choy N."/>
            <person name="Enju A."/>
            <person name="Goldsmith A.D."/>
            <person name="Gurjal M."/>
            <person name="Hansen N.F."/>
            <person name="Hayashizaki Y."/>
            <person name="Johnson-Hopson C."/>
            <person name="Hsuan V.W."/>
            <person name="Iida K."/>
            <person name="Karnes M."/>
            <person name="Khan S."/>
            <person name="Koesema E."/>
            <person name="Ishida J."/>
            <person name="Jiang P.X."/>
            <person name="Jones T."/>
            <person name="Kawai J."/>
            <person name="Kamiya A."/>
            <person name="Meyers C."/>
            <person name="Nakajima M."/>
            <person name="Narusaka M."/>
            <person name="Seki M."/>
            <person name="Sakurai T."/>
            <person name="Satou M."/>
            <person name="Tamse R."/>
            <person name="Vaysberg M."/>
            <person name="Wallender E.K."/>
            <person name="Wong C."/>
            <person name="Yamamura Y."/>
            <person name="Yuan S."/>
            <person name="Shinozaki K."/>
            <person name="Davis R.W."/>
            <person name="Theologis A."/>
            <person name="Ecker J.R."/>
        </authorList>
    </citation>
    <scope>NUCLEOTIDE SEQUENCE [LARGE SCALE MRNA]</scope>
    <source>
        <strain>cv. Columbia</strain>
    </source>
</reference>
<reference key="4">
    <citation type="journal article" date="2008" name="BMC Genomics">
        <title>Genome-wide analysis of CCCH zinc finger family in Arabidopsis and rice.</title>
        <authorList>
            <person name="Wang D."/>
            <person name="Guo Y."/>
            <person name="Wu C."/>
            <person name="Yang G."/>
            <person name="Li Y."/>
            <person name="Zheng C."/>
        </authorList>
    </citation>
    <scope>NOMENCLATURE</scope>
</reference>
<reference key="5">
    <citation type="journal article" date="2009" name="Plant Physiol.">
        <title>Large-scale Arabidopsis phosphoproteome profiling reveals novel chloroplast kinase substrates and phosphorylation networks.</title>
        <authorList>
            <person name="Reiland S."/>
            <person name="Messerli G."/>
            <person name="Baerenfaller K."/>
            <person name="Gerrits B."/>
            <person name="Endler A."/>
            <person name="Grossmann J."/>
            <person name="Gruissem W."/>
            <person name="Baginsky S."/>
        </authorList>
    </citation>
    <scope>IDENTIFICATION BY MASS SPECTROMETRY [LARGE SCALE ANALYSIS]</scope>
</reference>
<name>C3H17_ARATH</name>
<feature type="chain" id="PRO_0000371976" description="Zinc finger CCCH domain-containing protein 17">
    <location>
        <begin position="1"/>
        <end position="669"/>
    </location>
</feature>
<feature type="zinc finger region" description="C3H1-type 1" evidence="1">
    <location>
        <begin position="34"/>
        <end position="58"/>
    </location>
</feature>
<feature type="zinc finger region" description="C3H1-type 2" evidence="1">
    <location>
        <begin position="60"/>
        <end position="86"/>
    </location>
</feature>
<feature type="zinc finger region" description="C3H1-type 3" evidence="1">
    <location>
        <begin position="114"/>
        <end position="141"/>
    </location>
</feature>
<feature type="region of interest" description="Disordered" evidence="2">
    <location>
        <begin position="1"/>
        <end position="23"/>
    </location>
</feature>
<feature type="region of interest" description="Disordered" evidence="2">
    <location>
        <begin position="150"/>
        <end position="175"/>
    </location>
</feature>
<feature type="region of interest" description="Disordered" evidence="2">
    <location>
        <begin position="285"/>
        <end position="306"/>
    </location>
</feature>
<feature type="region of interest" description="Disordered" evidence="2">
    <location>
        <begin position="376"/>
        <end position="589"/>
    </location>
</feature>
<feature type="region of interest" description="Disordered" evidence="2">
    <location>
        <begin position="642"/>
        <end position="669"/>
    </location>
</feature>
<feature type="compositionally biased region" description="Low complexity" evidence="2">
    <location>
        <begin position="1"/>
        <end position="11"/>
    </location>
</feature>
<feature type="compositionally biased region" description="Basic and acidic residues" evidence="2">
    <location>
        <begin position="164"/>
        <end position="175"/>
    </location>
</feature>
<feature type="compositionally biased region" description="Basic and acidic residues" evidence="2">
    <location>
        <begin position="285"/>
        <end position="299"/>
    </location>
</feature>
<feature type="compositionally biased region" description="Basic and acidic residues" evidence="2">
    <location>
        <begin position="392"/>
        <end position="406"/>
    </location>
</feature>
<feature type="compositionally biased region" description="Basic and acidic residues" evidence="2">
    <location>
        <begin position="420"/>
        <end position="464"/>
    </location>
</feature>
<feature type="compositionally biased region" description="Basic and acidic residues" evidence="2">
    <location>
        <begin position="478"/>
        <end position="499"/>
    </location>
</feature>
<feature type="compositionally biased region" description="Basic and acidic residues" evidence="2">
    <location>
        <begin position="547"/>
        <end position="579"/>
    </location>
</feature>
<feature type="compositionally biased region" description="Acidic residues" evidence="2">
    <location>
        <begin position="580"/>
        <end position="589"/>
    </location>
</feature>
<feature type="compositionally biased region" description="Acidic residues" evidence="2">
    <location>
        <begin position="642"/>
        <end position="659"/>
    </location>
</feature>
<feature type="compositionally biased region" description="Basic and acidic residues" evidence="2">
    <location>
        <begin position="660"/>
        <end position="669"/>
    </location>
</feature>
<feature type="sequence conflict" description="In Ref. 3; AAM20729." evidence="3" ref="3">
    <original>K</original>
    <variation>E</variation>
    <location>
        <position position="30"/>
    </location>
</feature>
<feature type="sequence conflict" description="In Ref. 3; AAL24118." evidence="3" ref="3">
    <original>G</original>
    <variation>S</variation>
    <location>
        <position position="458"/>
    </location>
</feature>
<sequence length="669" mass="75832">MFAPATQPQQQHEQKKQSETVSSAEEDALKWNTDCVYFLASPLTCKKGPECEYRHSEYARMNPRDCYYWLNGNCLNPKCGFRHPPLEGLLGNQGGAPAVSVQPIHATAQHPSVAKQPVPCLFFQKGMCMKGDMCSFLHTPNPAAYKKQHPVEAKPATDPQCSKKPIENNTEEKKLPDVNLSKVVKGHTDISAAPRVASTGLRDSRSVEGYIPNHVGYEPVVQRKGPGFPSFTEGGHSTQLLQKYGSDDNNSFHNGKDADDVLRESSPGFDVLVDNEAGDSEYYHVEDRYGRRSQERGNSEYDPDFSAIADGDKEALREQRFDSYDRREDRGWGHRRVSSEREDRLDRRVYAEDERSENILESDLRYRLAKQRKGNGMRLSVGGHDYAAPDSSMDRGYRESRRDTPRENSISSSRLQGRIKLRERSNGEEGHHFDRRSERGRDRSELPSQGRLRDRIKGRLEENHSGNQERGFGAPWARRREMEDERKSAPKSSREESKPEPSLGKRKSFEEDHHSHKRSRDSFAAPLPFSEILKRKKAAASGGSRNNNKDETISKEEAGDEIKLITEEKTEVVSEPKAEVEEEGTVMEEEEIVGEEVYEGNEDEQAYEGDELNGEYYYEEGYEEEGGEYAYEEGEEVVYAAEEGEEEATEGGEGEGEEDIEKKTVEMLS</sequence>
<evidence type="ECO:0000255" key="1">
    <source>
        <dbReference type="PROSITE-ProRule" id="PRU00723"/>
    </source>
</evidence>
<evidence type="ECO:0000256" key="2">
    <source>
        <dbReference type="SAM" id="MobiDB-lite"/>
    </source>
</evidence>
<evidence type="ECO:0000305" key="3"/>
<comment type="interaction">
    <interactant intactId="EBI-15206592">
        <id>Q9ZUM0</id>
    </interactant>
    <interactant intactId="EBI-632231">
        <id>O24407</id>
        <label>IAA16</label>
    </interactant>
    <organismsDiffer>false</organismsDiffer>
    <experiments>3</experiments>
</comment>
<comment type="interaction">
    <interactant intactId="EBI-15206592">
        <id>Q9ZUM0</id>
    </interactant>
    <interactant intactId="EBI-632272">
        <id>O24410</id>
        <label>IAA20</label>
    </interactant>
    <organismsDiffer>false</organismsDiffer>
    <experiments>3</experiments>
</comment>
<comment type="interaction">
    <interactant intactId="EBI-15206592">
        <id>Q9ZUM0</id>
    </interactant>
    <interactant intactId="EBI-541321">
        <id>Q39140</id>
        <label>TGA6</label>
    </interactant>
    <organismsDiffer>false</organismsDiffer>
    <experiments>3</experiments>
</comment>
<gene>
    <name type="ordered locus">At2g02160</name>
    <name type="ORF">F5O4.7</name>
</gene>
<accession>Q9ZUM0</accession>
<accession>Q8L5Y1</accession>
<accession>Q93YT9</accession>